<sequence>MAGFPGKEAGPPGGWRKCQEDESPENERHENFYAEIDDFAPSVLTPTGSDSGAGEEDDDGLYQVPTHWPPLMAPTGLSGERVPCRTQAAVTSNTGNSPGSRHTSCPFTLPRGAQPPAPAHQKPTAPTPKPRSRECGPSKTPDPFSWFRKTSCTEGGADSTSRSFMYQKGFEEGLAGLGLDDKSDCESEDESNFRRPSSHSALKQKNGGKGKPSGLFEHLAAHGREFSKLSKHAAQLKRLSGSVMNVLNLDDAQDTRQAKAQRKESTRVPIVTHLTNHVPVIKPACSLFLEGAPGVGKTTMLNHLKAVFGDLTIVVPEPMRYWTHVYENAIKAMHKNVTRARHGREDTSAEVLACQMKFTTPFRVLASRKRSLLVTESGARSVAPLDCWILHDRHLLSASVVFPLMLLRSQLLSYSDFIQVLATFTADPGDTIVWMKLNVEENMRRLKKRGRKHESGLDAGYLKSVNDAYHAVYCAWLLTQYFAPEDIVKVCAGLTTITTVCHQSHTPIIRSGVAEKLYKNSIFSVLKEVIQPFRADAVLLEVCLAFTRTLAYLQFVLVDLSEFQDDLPGCWTEIYMQALKNPAIRSQFFDWAGLSKVISDFERGNRD</sequence>
<keyword id="KW-0067">ATP-binding</keyword>
<keyword id="KW-0237">DNA synthesis</keyword>
<keyword id="KW-0244">Early protein</keyword>
<keyword id="KW-1048">Host nucleus</keyword>
<keyword id="KW-0418">Kinase</keyword>
<keyword id="KW-0547">Nucleotide-binding</keyword>
<keyword id="KW-1185">Reference proteome</keyword>
<keyword id="KW-0808">Transferase</keyword>
<keyword id="KW-0946">Virion</keyword>
<keyword id="KW-0920">Virion tegument</keyword>
<dbReference type="EC" id="2.7.1.21" evidence="2"/>
<dbReference type="EMBL" id="DQ279927">
    <property type="protein sequence ID" value="ABB89277.1"/>
    <property type="molecule type" value="Genomic_DNA"/>
</dbReference>
<dbReference type="RefSeq" id="YP_001129497.1">
    <property type="nucleotide sequence ID" value="NC_009334.1"/>
</dbReference>
<dbReference type="SMR" id="Q1HVD1"/>
<dbReference type="KEGG" id="vg:5176155"/>
<dbReference type="Proteomes" id="UP000007639">
    <property type="component" value="Genome"/>
</dbReference>
<dbReference type="GO" id="GO:0042025">
    <property type="term" value="C:host cell nucleus"/>
    <property type="evidence" value="ECO:0007669"/>
    <property type="project" value="UniProtKB-SubCell"/>
</dbReference>
<dbReference type="GO" id="GO:0019033">
    <property type="term" value="C:viral tegument"/>
    <property type="evidence" value="ECO:0007669"/>
    <property type="project" value="UniProtKB-SubCell"/>
</dbReference>
<dbReference type="GO" id="GO:0005524">
    <property type="term" value="F:ATP binding"/>
    <property type="evidence" value="ECO:0007669"/>
    <property type="project" value="UniProtKB-KW"/>
</dbReference>
<dbReference type="GO" id="GO:0004797">
    <property type="term" value="F:thymidine kinase activity"/>
    <property type="evidence" value="ECO:0007669"/>
    <property type="project" value="UniProtKB-EC"/>
</dbReference>
<dbReference type="GO" id="GO:0071897">
    <property type="term" value="P:DNA biosynthetic process"/>
    <property type="evidence" value="ECO:0007669"/>
    <property type="project" value="UniProtKB-KW"/>
</dbReference>
<dbReference type="GO" id="GO:0006230">
    <property type="term" value="P:TMP biosynthetic process"/>
    <property type="evidence" value="ECO:0007669"/>
    <property type="project" value="InterPro"/>
</dbReference>
<dbReference type="Gene3D" id="3.40.50.300">
    <property type="entry name" value="P-loop containing nucleotide triphosphate hydrolases"/>
    <property type="match status" value="1"/>
</dbReference>
<dbReference type="HAMAP" id="MF_04029">
    <property type="entry name" value="HSV_KITH"/>
    <property type="match status" value="1"/>
</dbReference>
<dbReference type="InterPro" id="IPR050566">
    <property type="entry name" value="Deoxyribonucleoside_kinase"/>
</dbReference>
<dbReference type="InterPro" id="IPR001889">
    <property type="entry name" value="Herpes_TK"/>
</dbReference>
<dbReference type="InterPro" id="IPR013672">
    <property type="entry name" value="Herpes_TK_C"/>
</dbReference>
<dbReference type="InterPro" id="IPR027417">
    <property type="entry name" value="P-loop_NTPase"/>
</dbReference>
<dbReference type="PANTHER" id="PTHR10513:SF35">
    <property type="entry name" value="DEOXYADENOSINE KINASE"/>
    <property type="match status" value="1"/>
</dbReference>
<dbReference type="PANTHER" id="PTHR10513">
    <property type="entry name" value="DEOXYNUCLEOSIDE KINASE"/>
    <property type="match status" value="1"/>
</dbReference>
<dbReference type="Pfam" id="PF00693">
    <property type="entry name" value="Herpes_TK"/>
    <property type="match status" value="1"/>
</dbReference>
<dbReference type="Pfam" id="PF08465">
    <property type="entry name" value="Herpes_TK_C"/>
    <property type="match status" value="1"/>
</dbReference>
<dbReference type="SUPFAM" id="SSF52540">
    <property type="entry name" value="P-loop containing nucleoside triphosphate hydrolases"/>
    <property type="match status" value="1"/>
</dbReference>
<organism>
    <name type="scientific">Epstein-Barr virus (strain AG876)</name>
    <name type="common">HHV-4</name>
    <name type="synonym">Human herpesvirus 4</name>
    <dbReference type="NCBI Taxonomy" id="82830"/>
    <lineage>
        <taxon>Viruses</taxon>
        <taxon>Duplodnaviria</taxon>
        <taxon>Heunggongvirae</taxon>
        <taxon>Peploviricota</taxon>
        <taxon>Herviviricetes</taxon>
        <taxon>Herpesvirales</taxon>
        <taxon>Orthoherpesviridae</taxon>
        <taxon>Gammaherpesvirinae</taxon>
        <taxon>Lymphocryptovirus</taxon>
        <taxon>Lymphocryptovirus humangamma4</taxon>
        <taxon>Epstein-Barr virus (strain GD1)</taxon>
    </lineage>
</organism>
<evidence type="ECO:0000250" key="1"/>
<evidence type="ECO:0000255" key="2">
    <source>
        <dbReference type="HAMAP-Rule" id="MF_04029"/>
    </source>
</evidence>
<evidence type="ECO:0000256" key="3">
    <source>
        <dbReference type="SAM" id="MobiDB-lite"/>
    </source>
</evidence>
<feature type="chain" id="PRO_0000375957" description="Thymidine kinase">
    <location>
        <begin position="1"/>
        <end position="607"/>
    </location>
</feature>
<feature type="region of interest" description="Disordered" evidence="3">
    <location>
        <begin position="1"/>
        <end position="160"/>
    </location>
</feature>
<feature type="region of interest" description="Disordered" evidence="3">
    <location>
        <begin position="180"/>
        <end position="215"/>
    </location>
</feature>
<feature type="compositionally biased region" description="Basic and acidic residues" evidence="3">
    <location>
        <begin position="17"/>
        <end position="32"/>
    </location>
</feature>
<feature type="compositionally biased region" description="Polar residues" evidence="3">
    <location>
        <begin position="88"/>
        <end position="106"/>
    </location>
</feature>
<feature type="compositionally biased region" description="Polar residues" evidence="3">
    <location>
        <begin position="148"/>
        <end position="160"/>
    </location>
</feature>
<feature type="compositionally biased region" description="Polar residues" evidence="3">
    <location>
        <begin position="194"/>
        <end position="203"/>
    </location>
</feature>
<feature type="active site" description="Proton acceptor" evidence="2">
    <location>
        <position position="317"/>
    </location>
</feature>
<feature type="binding site" evidence="2">
    <location>
        <begin position="291"/>
        <end position="298"/>
    </location>
    <ligand>
        <name>ATP</name>
        <dbReference type="ChEBI" id="CHEBI:30616"/>
    </ligand>
</feature>
<feature type="binding site" evidence="2">
    <location>
        <position position="355"/>
    </location>
    <ligand>
        <name>substrate</name>
    </ligand>
</feature>
<feature type="binding site" evidence="2">
    <location>
        <position position="445"/>
    </location>
    <ligand>
        <name>ATP</name>
        <dbReference type="ChEBI" id="CHEBI:30616"/>
    </ligand>
</feature>
<feature type="binding site" evidence="2">
    <location>
        <position position="451"/>
    </location>
    <ligand>
        <name>substrate</name>
    </ligand>
</feature>
<comment type="function">
    <text evidence="2">Catalyzes the transfer of the gamma-phospho group of ATP to thymidine to generate dTMP in the salvage pathway of pyrimidine synthesis. The dTMP serves as a substrate for DNA polymerase during viral DNA replication. Allows the virus to be reactivated and to grow in non-proliferative cells lacking a high concentration of phosphorylated nucleic acid precursors.</text>
</comment>
<comment type="catalytic activity">
    <reaction evidence="2">
        <text>thymidine + ATP = dTMP + ADP + H(+)</text>
        <dbReference type="Rhea" id="RHEA:19129"/>
        <dbReference type="ChEBI" id="CHEBI:15378"/>
        <dbReference type="ChEBI" id="CHEBI:17748"/>
        <dbReference type="ChEBI" id="CHEBI:30616"/>
        <dbReference type="ChEBI" id="CHEBI:63528"/>
        <dbReference type="ChEBI" id="CHEBI:456216"/>
        <dbReference type="EC" id="2.7.1.21"/>
    </reaction>
</comment>
<comment type="subunit">
    <text evidence="2">Homodimer.</text>
</comment>
<comment type="subcellular location">
    <subcellularLocation>
        <location>Virion tegument</location>
    </subcellularLocation>
    <subcellularLocation>
        <location evidence="1">Host nucleus</location>
    </subcellularLocation>
    <text evidence="1">Localizes to the centrosome and more precisely to the periphery of the centriole, tightly encircling the tubulin-rich centrioles.</text>
</comment>
<comment type="miscellaneous">
    <text evidence="1">Phosphorylates and thereby activates certain drugs like acyclovir (ACV), valacyclovir, and famciclovir to a toxic form, that leads to successful suppression of the infection, while the uninfected cell does not have this ability because it lacks TK.</text>
</comment>
<comment type="similarity">
    <text evidence="2">Belongs to the herpesviridae thymidine kinase family.</text>
</comment>
<protein>
    <recommendedName>
        <fullName evidence="2">Thymidine kinase</fullName>
        <ecNumber evidence="2">2.7.1.21</ecNumber>
    </recommendedName>
</protein>
<name>KITH_EBVA8</name>
<proteinExistence type="inferred from homology"/>
<organismHost>
    <name type="scientific">Homo sapiens</name>
    <name type="common">Human</name>
    <dbReference type="NCBI Taxonomy" id="9606"/>
</organismHost>
<accession>Q1HVD1</accession>
<reference key="1">
    <citation type="journal article" date="2006" name="Virology">
        <title>The genome of Epstein-Barr virus type 2 strain AG876.</title>
        <authorList>
            <person name="Dolan A."/>
            <person name="Addison C."/>
            <person name="Gatherer D."/>
            <person name="Davison A.J."/>
            <person name="McGeoch D.J."/>
        </authorList>
    </citation>
    <scope>NUCLEOTIDE SEQUENCE [LARGE SCALE GENOMIC DNA]</scope>
</reference>
<gene>
    <name evidence="2" type="primary">TK</name>
    <name type="ORF">BXLF1</name>
</gene>